<evidence type="ECO:0000256" key="1">
    <source>
        <dbReference type="SAM" id="MobiDB-lite"/>
    </source>
</evidence>
<evidence type="ECO:0000269" key="2">
    <source>
    </source>
</evidence>
<evidence type="ECO:0000269" key="3">
    <source>
    </source>
</evidence>
<evidence type="ECO:0007744" key="4">
    <source>
    </source>
</evidence>
<evidence type="ECO:0007744" key="5">
    <source>
    </source>
</evidence>
<evidence type="ECO:0007744" key="6">
    <source>
    </source>
</evidence>
<organism>
    <name type="scientific">Saccharomyces cerevisiae (strain ATCC 204508 / S288c)</name>
    <name type="common">Baker's yeast</name>
    <dbReference type="NCBI Taxonomy" id="559292"/>
    <lineage>
        <taxon>Eukaryota</taxon>
        <taxon>Fungi</taxon>
        <taxon>Dikarya</taxon>
        <taxon>Ascomycota</taxon>
        <taxon>Saccharomycotina</taxon>
        <taxon>Saccharomycetes</taxon>
        <taxon>Saccharomycetales</taxon>
        <taxon>Saccharomycetaceae</taxon>
        <taxon>Saccharomyces</taxon>
    </lineage>
</organism>
<keyword id="KW-0961">Cell wall biogenesis/degradation</keyword>
<keyword id="KW-0963">Cytoplasm</keyword>
<keyword id="KW-0597">Phosphoprotein</keyword>
<keyword id="KW-1185">Reference proteome</keyword>
<sequence length="1274" mass="145052">MGNTDSKSSSILLNHCIALVRPEDADASSPSRTSSPSPSLSVDADPLSLNLSIFKLDSGPDVEALFSDKPNVPLDTVFNDFYLDFISVDVQDFSINSSFKKILHIISSLNPPNFNNLIVFLSLYIILSANSLPASRTGLHSSRLINAIKTLSILIPIYFDRVKSSTQDHYDVFWATQHEIEGLPLQNIPLGERLLLAILKLAFQDNFTTAVTAHPSELWEIGILTNSNKYRSLLNMHHQWHLFANRLLLLRLLAALFSSDLYTSGGKQDINMFLVYWCTQMPKDKSIQFTSSLLNCTMRFILNNNKDFQSLKANFFSSDATASNWQTLYFQFVQSCLHVLNLSMSYKAQDNVITIFLTQLQREYDLKLILSSFIKIFKYPIDLAIEQESNIFNFTNNKHIDASRRRAVSTSSHDNSSSSHASLPSSSSAAYHTKPQTKPQLPEIHPLLIPMTILMTNLIDCNKCFQNYFADKFASRFIIFSIYYLKYYDYSSLSSSSSTTRSNSSTTSNGTSNDTSNERSIVELNENSVSQILLPLLNHLLLILTSKKLVLFKMLQTFNLNYYTNNLPNFYKLSNINGDINNLTFRDFTVIQLSNLILDNIKFNLQPNPIFYELIYNLLPINDEILTSSHKNDDSHDDLILLSAKKKSASPSAATSSHTSSSKLSYNAAMSLLYVLSKSSNKVYLTTYATPVFKTKDIPYMISPGFKMDLLALLLRSITIFFTLYFDDAENLLFAMVRHQSITHQINDSINSISKALDMNPNLNSHIMTLKQMGFNRKVQWKDFYQFEEITDLPQVNLYSSANQQHQNQQQGQNDNRGQNQNEDPGQENESPTPYLLFNPASLENETPGTVKHFSSTNHDKNYQVIAFIDFKSDSNLNLQHQLEYWPHRPQWPTPLTFTHKCKNPKYENFNEVWSGTVYLQILLRVIKQILSKVPEIPRIKSVQYFETLSKLSALRSDILTTIHPRLPLDVRRLTTFQPLSMHTNDKLLMWFHIATWANIFTQTSFKYEETFSHELRQFESLLDISIDECEGNTISKPTTDRLGYIRRSRGQSSVSLERTISAGSGVSTPTMALNRTKSNGSGNLMNYFFQNTAQNHFQHLRSSSSSSSITLEKTTSNSSSIRTRPNSHHVAPETNNNNSTNGNSNNSSNGGFSFFKWKWGGNNSNGGSDDTKASQRDPNVSTSIITDNLNSYMFEEEISPGVVNNIIENNIWVGTDIRLFKIANFRKESFSFLEMTSSFFKKFKFINSDNDNYNNNEFDDNTQLRYTSRGLYR</sequence>
<dbReference type="EMBL" id="U21094">
    <property type="protein sequence ID" value="AAB67519.1"/>
    <property type="molecule type" value="Genomic_DNA"/>
</dbReference>
<dbReference type="EMBL" id="BK006945">
    <property type="protein sequence ID" value="DAA09736.1"/>
    <property type="molecule type" value="Genomic_DNA"/>
</dbReference>
<dbReference type="PIR" id="S59405">
    <property type="entry name" value="S59405"/>
</dbReference>
<dbReference type="RefSeq" id="NP_013540.1">
    <property type="nucleotide sequence ID" value="NM_001182324.1"/>
</dbReference>
<dbReference type="SMR" id="Q06673"/>
<dbReference type="BioGRID" id="31694">
    <property type="interactions" value="116"/>
</dbReference>
<dbReference type="DIP" id="DIP-2932N"/>
<dbReference type="FunCoup" id="Q06673">
    <property type="interactions" value="80"/>
</dbReference>
<dbReference type="IntAct" id="Q06673">
    <property type="interactions" value="7"/>
</dbReference>
<dbReference type="MINT" id="Q06673"/>
<dbReference type="STRING" id="4932.YLR436C"/>
<dbReference type="GlyGen" id="Q06673">
    <property type="glycosylation" value="1 site, 1 O-linked glycan (1 site)"/>
</dbReference>
<dbReference type="iPTMnet" id="Q06673"/>
<dbReference type="PaxDb" id="4932-YLR436C"/>
<dbReference type="PeptideAtlas" id="Q06673"/>
<dbReference type="EnsemblFungi" id="YLR436C_mRNA">
    <property type="protein sequence ID" value="YLR436C"/>
    <property type="gene ID" value="YLR436C"/>
</dbReference>
<dbReference type="GeneID" id="851156"/>
<dbReference type="KEGG" id="sce:YLR436C"/>
<dbReference type="AGR" id="SGD:S000004428"/>
<dbReference type="SGD" id="S000004428">
    <property type="gene designation" value="ECM30"/>
</dbReference>
<dbReference type="VEuPathDB" id="FungiDB:YLR436C"/>
<dbReference type="eggNOG" id="KOG2226">
    <property type="taxonomic scope" value="Eukaryota"/>
</dbReference>
<dbReference type="HOGENOM" id="CLU_003989_0_0_1"/>
<dbReference type="InParanoid" id="Q06673"/>
<dbReference type="OMA" id="WENGINT"/>
<dbReference type="OrthoDB" id="432953at2759"/>
<dbReference type="BioCyc" id="YEAST:G3O-32493-MONOMER"/>
<dbReference type="BioGRID-ORCS" id="851156">
    <property type="hits" value="0 hits in 10 CRISPR screens"/>
</dbReference>
<dbReference type="PRO" id="PR:Q06673"/>
<dbReference type="Proteomes" id="UP000002311">
    <property type="component" value="Chromosome XII"/>
</dbReference>
<dbReference type="RNAct" id="Q06673">
    <property type="molecule type" value="protein"/>
</dbReference>
<dbReference type="GO" id="GO:0005737">
    <property type="term" value="C:cytoplasm"/>
    <property type="evidence" value="ECO:0007005"/>
    <property type="project" value="SGD"/>
</dbReference>
<dbReference type="GO" id="GO:0005797">
    <property type="term" value="C:Golgi medial cisterna"/>
    <property type="evidence" value="ECO:0000318"/>
    <property type="project" value="GO_Central"/>
</dbReference>
<dbReference type="GO" id="GO:0000138">
    <property type="term" value="C:Golgi trans cisterna"/>
    <property type="evidence" value="ECO:0000318"/>
    <property type="project" value="GO_Central"/>
</dbReference>
<dbReference type="GO" id="GO:0016020">
    <property type="term" value="C:membrane"/>
    <property type="evidence" value="ECO:0000318"/>
    <property type="project" value="GO_Central"/>
</dbReference>
<dbReference type="GO" id="GO:0071555">
    <property type="term" value="P:cell wall organization"/>
    <property type="evidence" value="ECO:0007669"/>
    <property type="project" value="UniProtKB-KW"/>
</dbReference>
<dbReference type="InterPro" id="IPR026705">
    <property type="entry name" value="Hid-1/Ecm30"/>
</dbReference>
<dbReference type="PANTHER" id="PTHR21575">
    <property type="entry name" value="PROTEIN HID1"/>
    <property type="match status" value="1"/>
</dbReference>
<dbReference type="PANTHER" id="PTHR21575:SF12">
    <property type="entry name" value="PROTEIN HID1"/>
    <property type="match status" value="1"/>
</dbReference>
<dbReference type="Pfam" id="PF12722">
    <property type="entry name" value="Hid1"/>
    <property type="match status" value="2"/>
</dbReference>
<name>ECM30_YEAST</name>
<accession>Q06673</accession>
<accession>D6VZ70</accession>
<comment type="function">
    <text>Seems to be involved in cell wall organization and biogenesis.</text>
</comment>
<comment type="subcellular location">
    <subcellularLocation>
        <location evidence="2">Cytoplasm</location>
    </subcellularLocation>
</comment>
<comment type="miscellaneous">
    <text evidence="3">Present with 1080 molecules/cell in log phase SD medium.</text>
</comment>
<gene>
    <name type="primary">ECM30</name>
    <name type="ordered locus">YLR436C</name>
</gene>
<feature type="chain" id="PRO_0000086919" description="Protein ECM30">
    <location>
        <begin position="1"/>
        <end position="1274"/>
    </location>
</feature>
<feature type="region of interest" description="Disordered" evidence="1">
    <location>
        <begin position="23"/>
        <end position="42"/>
    </location>
</feature>
<feature type="region of interest" description="Disordered" evidence="1">
    <location>
        <begin position="405"/>
        <end position="439"/>
    </location>
</feature>
<feature type="region of interest" description="Disordered" evidence="1">
    <location>
        <begin position="494"/>
        <end position="517"/>
    </location>
</feature>
<feature type="region of interest" description="Disordered" evidence="1">
    <location>
        <begin position="803"/>
        <end position="842"/>
    </location>
</feature>
<feature type="region of interest" description="Disordered" evidence="1">
    <location>
        <begin position="1100"/>
        <end position="1149"/>
    </location>
</feature>
<feature type="compositionally biased region" description="Low complexity" evidence="1">
    <location>
        <begin position="27"/>
        <end position="42"/>
    </location>
</feature>
<feature type="compositionally biased region" description="Low complexity" evidence="1">
    <location>
        <begin position="409"/>
        <end position="432"/>
    </location>
</feature>
<feature type="compositionally biased region" description="Low complexity" evidence="1">
    <location>
        <begin position="494"/>
        <end position="515"/>
    </location>
</feature>
<feature type="compositionally biased region" description="Low complexity" evidence="1">
    <location>
        <begin position="803"/>
        <end position="822"/>
    </location>
</feature>
<feature type="compositionally biased region" description="Polar residues" evidence="1">
    <location>
        <begin position="1110"/>
        <end position="1125"/>
    </location>
</feature>
<feature type="compositionally biased region" description="Low complexity" evidence="1">
    <location>
        <begin position="1135"/>
        <end position="1149"/>
    </location>
</feature>
<feature type="modified residue" description="Phosphoserine" evidence="5 6">
    <location>
        <position position="635"/>
    </location>
</feature>
<feature type="modified residue" description="Phosphoserine" evidence="4 6">
    <location>
        <position position="1065"/>
    </location>
</feature>
<protein>
    <recommendedName>
        <fullName>Protein ECM30</fullName>
    </recommendedName>
    <alternativeName>
        <fullName>Extracellular mutant protein 30</fullName>
    </alternativeName>
</protein>
<proteinExistence type="evidence at protein level"/>
<reference key="1">
    <citation type="journal article" date="1997" name="Nature">
        <title>The nucleotide sequence of Saccharomyces cerevisiae chromosome XII.</title>
        <authorList>
            <person name="Johnston M."/>
            <person name="Hillier L.W."/>
            <person name="Riles L."/>
            <person name="Albermann K."/>
            <person name="Andre B."/>
            <person name="Ansorge W."/>
            <person name="Benes V."/>
            <person name="Brueckner M."/>
            <person name="Delius H."/>
            <person name="Dubois E."/>
            <person name="Duesterhoeft A."/>
            <person name="Entian K.-D."/>
            <person name="Floeth M."/>
            <person name="Goffeau A."/>
            <person name="Hebling U."/>
            <person name="Heumann K."/>
            <person name="Heuss-Neitzel D."/>
            <person name="Hilbert H."/>
            <person name="Hilger F."/>
            <person name="Kleine K."/>
            <person name="Koetter P."/>
            <person name="Louis E.J."/>
            <person name="Messenguy F."/>
            <person name="Mewes H.-W."/>
            <person name="Miosga T."/>
            <person name="Moestl D."/>
            <person name="Mueller-Auer S."/>
            <person name="Nentwich U."/>
            <person name="Obermaier B."/>
            <person name="Piravandi E."/>
            <person name="Pohl T.M."/>
            <person name="Portetelle D."/>
            <person name="Purnelle B."/>
            <person name="Rechmann S."/>
            <person name="Rieger M."/>
            <person name="Rinke M."/>
            <person name="Rose M."/>
            <person name="Scharfe M."/>
            <person name="Scherens B."/>
            <person name="Scholler P."/>
            <person name="Schwager C."/>
            <person name="Schwarz S."/>
            <person name="Underwood A.P."/>
            <person name="Urrestarazu L.A."/>
            <person name="Vandenbol M."/>
            <person name="Verhasselt P."/>
            <person name="Vierendeels F."/>
            <person name="Voet M."/>
            <person name="Volckaert G."/>
            <person name="Voss H."/>
            <person name="Wambutt R."/>
            <person name="Wedler E."/>
            <person name="Wedler H."/>
            <person name="Zimmermann F.K."/>
            <person name="Zollner A."/>
            <person name="Hani J."/>
            <person name="Hoheisel J.D."/>
        </authorList>
    </citation>
    <scope>NUCLEOTIDE SEQUENCE [LARGE SCALE GENOMIC DNA]</scope>
    <source>
        <strain>ATCC 204508 / S288c</strain>
    </source>
</reference>
<reference key="2">
    <citation type="journal article" date="2014" name="G3 (Bethesda)">
        <title>The reference genome sequence of Saccharomyces cerevisiae: Then and now.</title>
        <authorList>
            <person name="Engel S.R."/>
            <person name="Dietrich F.S."/>
            <person name="Fisk D.G."/>
            <person name="Binkley G."/>
            <person name="Balakrishnan R."/>
            <person name="Costanzo M.C."/>
            <person name="Dwight S.S."/>
            <person name="Hitz B.C."/>
            <person name="Karra K."/>
            <person name="Nash R.S."/>
            <person name="Weng S."/>
            <person name="Wong E.D."/>
            <person name="Lloyd P."/>
            <person name="Skrzypek M.S."/>
            <person name="Miyasato S.R."/>
            <person name="Simison M."/>
            <person name="Cherry J.M."/>
        </authorList>
    </citation>
    <scope>GENOME REANNOTATION</scope>
    <source>
        <strain>ATCC 204508 / S288c</strain>
    </source>
</reference>
<reference key="3">
    <citation type="journal article" date="1997" name="Genetics">
        <title>Large scale identification of genes involved in cell surface biosynthesis and architecture in Saccharomyces cerevisiae.</title>
        <authorList>
            <person name="Lussier M."/>
            <person name="White A.-M."/>
            <person name="Sheraton J."/>
            <person name="di Paolo T."/>
            <person name="Treadwell J."/>
            <person name="Southard S.B."/>
            <person name="Horenstein C.I."/>
            <person name="Chen-Weiner J."/>
            <person name="Ram A.F.J."/>
            <person name="Kapteyn J.C."/>
            <person name="Roemer T.W."/>
            <person name="Vo D.H."/>
            <person name="Bondoc D.C."/>
            <person name="Hall J."/>
            <person name="Zhong W.-W."/>
            <person name="Sdicu A.-M."/>
            <person name="Davies J."/>
            <person name="Klis F.M."/>
            <person name="Robbins P.W."/>
            <person name="Bussey H."/>
        </authorList>
    </citation>
    <scope>IDENTIFICATION</scope>
</reference>
<reference key="4">
    <citation type="journal article" date="2003" name="Nature">
        <title>Global analysis of protein localization in budding yeast.</title>
        <authorList>
            <person name="Huh W.-K."/>
            <person name="Falvo J.V."/>
            <person name="Gerke L.C."/>
            <person name="Carroll A.S."/>
            <person name="Howson R.W."/>
            <person name="Weissman J.S."/>
            <person name="O'Shea E.K."/>
        </authorList>
    </citation>
    <scope>SUBCELLULAR LOCATION [LARGE SCALE ANALYSIS]</scope>
</reference>
<reference key="5">
    <citation type="journal article" date="2003" name="Nature">
        <title>Global analysis of protein expression in yeast.</title>
        <authorList>
            <person name="Ghaemmaghami S."/>
            <person name="Huh W.-K."/>
            <person name="Bower K."/>
            <person name="Howson R.W."/>
            <person name="Belle A."/>
            <person name="Dephoure N."/>
            <person name="O'Shea E.K."/>
            <person name="Weissman J.S."/>
        </authorList>
    </citation>
    <scope>LEVEL OF PROTEIN EXPRESSION [LARGE SCALE ANALYSIS]</scope>
</reference>
<reference key="6">
    <citation type="journal article" date="2007" name="J. Proteome Res.">
        <title>Large-scale phosphorylation analysis of alpha-factor-arrested Saccharomyces cerevisiae.</title>
        <authorList>
            <person name="Li X."/>
            <person name="Gerber S.A."/>
            <person name="Rudner A.D."/>
            <person name="Beausoleil S.A."/>
            <person name="Haas W."/>
            <person name="Villen J."/>
            <person name="Elias J.E."/>
            <person name="Gygi S.P."/>
        </authorList>
    </citation>
    <scope>PHOSPHORYLATION [LARGE SCALE ANALYSIS] AT SER-1065</scope>
    <scope>IDENTIFICATION BY MASS SPECTROMETRY [LARGE SCALE ANALYSIS]</scope>
    <source>
        <strain>ADR376</strain>
    </source>
</reference>
<reference key="7">
    <citation type="journal article" date="2008" name="Mol. Cell. Proteomics">
        <title>A multidimensional chromatography technology for in-depth phosphoproteome analysis.</title>
        <authorList>
            <person name="Albuquerque C.P."/>
            <person name="Smolka M.B."/>
            <person name="Payne S.H."/>
            <person name="Bafna V."/>
            <person name="Eng J."/>
            <person name="Zhou H."/>
        </authorList>
    </citation>
    <scope>PHOSPHORYLATION [LARGE SCALE ANALYSIS] AT SER-635</scope>
    <scope>IDENTIFICATION BY MASS SPECTROMETRY [LARGE SCALE ANALYSIS]</scope>
</reference>
<reference key="8">
    <citation type="journal article" date="2009" name="Science">
        <title>Global analysis of Cdk1 substrate phosphorylation sites provides insights into evolution.</title>
        <authorList>
            <person name="Holt L.J."/>
            <person name="Tuch B.B."/>
            <person name="Villen J."/>
            <person name="Johnson A.D."/>
            <person name="Gygi S.P."/>
            <person name="Morgan D.O."/>
        </authorList>
    </citation>
    <scope>PHOSPHORYLATION [LARGE SCALE ANALYSIS] AT SER-635 AND SER-1065</scope>
    <scope>IDENTIFICATION BY MASS SPECTROMETRY [LARGE SCALE ANALYSIS]</scope>
</reference>